<comment type="similarity">
    <text evidence="4">Belongs to the short-chain dehydrogenases/reductases (SDR) family.</text>
</comment>
<sequence>MANQKKKTLPPQHQNQQPGFEYLMDPRPVFDKPKKAKKLEGKTAIITGGDSGIGRAVSVLFAKEGANVVIVYLNEHQDAEETKQYVEKEGVKCLLIAGDVGDEAFCNDVVGQASQVFPSIDILVNNAAEQHVQPSIEKITSHQLIRTFQTNIFSMFYLTKAVLPHLKKGSSIINTASITAYKGNKTLIDYSATKGAIVTFTRSLSQSLVQQGIRVNAVAPGPIWTPLIPASFAAKDVEVFGSDVPMERPGQPVEVAPSYLYLASDDSTYVTGQTIHVNGGTIVNG</sequence>
<evidence type="ECO:0000250" key="1"/>
<evidence type="ECO:0000255" key="2">
    <source>
        <dbReference type="PROSITE-ProRule" id="PRU10001"/>
    </source>
</evidence>
<evidence type="ECO:0000256" key="3">
    <source>
        <dbReference type="SAM" id="MobiDB-lite"/>
    </source>
</evidence>
<evidence type="ECO:0000305" key="4"/>
<proteinExistence type="inferred from homology"/>
<dbReference type="EC" id="1.-.-.-"/>
<dbReference type="EMBL" id="Y14084">
    <property type="protein sequence ID" value="CAA74547.1"/>
    <property type="molecule type" value="Genomic_DNA"/>
</dbReference>
<dbReference type="EMBL" id="AL009126">
    <property type="protein sequence ID" value="CAB12880.1"/>
    <property type="molecule type" value="Genomic_DNA"/>
</dbReference>
<dbReference type="EMBL" id="S70734">
    <property type="protein sequence ID" value="AAB30863.1"/>
    <property type="molecule type" value="Genomic_DNA"/>
</dbReference>
<dbReference type="PIR" id="D69835">
    <property type="entry name" value="D69835"/>
</dbReference>
<dbReference type="RefSeq" id="NP_388921.1">
    <property type="nucleotide sequence ID" value="NC_000964.3"/>
</dbReference>
<dbReference type="RefSeq" id="WP_003245662.1">
    <property type="nucleotide sequence ID" value="NZ_OZ025638.1"/>
</dbReference>
<dbReference type="SMR" id="P40397"/>
<dbReference type="FunCoup" id="P40397">
    <property type="interactions" value="102"/>
</dbReference>
<dbReference type="STRING" id="224308.BSU10400"/>
<dbReference type="PaxDb" id="224308-BSU10400"/>
<dbReference type="EnsemblBacteria" id="CAB12880">
    <property type="protein sequence ID" value="CAB12880"/>
    <property type="gene ID" value="BSU_10400"/>
</dbReference>
<dbReference type="GeneID" id="939316"/>
<dbReference type="KEGG" id="bsu:BSU10400"/>
<dbReference type="PATRIC" id="fig|224308.179.peg.1118"/>
<dbReference type="eggNOG" id="COG1028">
    <property type="taxonomic scope" value="Bacteria"/>
</dbReference>
<dbReference type="InParanoid" id="P40397"/>
<dbReference type="OrthoDB" id="9803333at2"/>
<dbReference type="PhylomeDB" id="P40397"/>
<dbReference type="BioCyc" id="BSUB:BSU10400-MONOMER"/>
<dbReference type="Proteomes" id="UP000001570">
    <property type="component" value="Chromosome"/>
</dbReference>
<dbReference type="GO" id="GO:0016614">
    <property type="term" value="F:oxidoreductase activity, acting on CH-OH group of donors"/>
    <property type="evidence" value="ECO:0007669"/>
    <property type="project" value="UniProtKB-ARBA"/>
</dbReference>
<dbReference type="CDD" id="cd05355">
    <property type="entry name" value="SDR_c1"/>
    <property type="match status" value="1"/>
</dbReference>
<dbReference type="FunFam" id="3.40.50.720:FF:000084">
    <property type="entry name" value="Short-chain dehydrogenase reductase"/>
    <property type="match status" value="1"/>
</dbReference>
<dbReference type="Gene3D" id="3.40.50.720">
    <property type="entry name" value="NAD(P)-binding Rossmann-like Domain"/>
    <property type="match status" value="1"/>
</dbReference>
<dbReference type="InterPro" id="IPR036291">
    <property type="entry name" value="NAD(P)-bd_dom_sf"/>
</dbReference>
<dbReference type="InterPro" id="IPR020904">
    <property type="entry name" value="Sc_DH/Rdtase_CS"/>
</dbReference>
<dbReference type="InterPro" id="IPR002347">
    <property type="entry name" value="SDR_fam"/>
</dbReference>
<dbReference type="NCBIfam" id="NF005214">
    <property type="entry name" value="PRK06701.1"/>
    <property type="match status" value="1"/>
</dbReference>
<dbReference type="PANTHER" id="PTHR48107:SF16">
    <property type="entry name" value="NADPH-DEPENDENT ALDEHYDE REDUCTASE 1, CHLOROPLASTIC"/>
    <property type="match status" value="1"/>
</dbReference>
<dbReference type="PANTHER" id="PTHR48107">
    <property type="entry name" value="NADPH-DEPENDENT ALDEHYDE REDUCTASE-LIKE PROTEIN, CHLOROPLASTIC-RELATED"/>
    <property type="match status" value="1"/>
</dbReference>
<dbReference type="Pfam" id="PF13561">
    <property type="entry name" value="adh_short_C2"/>
    <property type="match status" value="1"/>
</dbReference>
<dbReference type="PRINTS" id="PR00081">
    <property type="entry name" value="GDHRDH"/>
</dbReference>
<dbReference type="PRINTS" id="PR00080">
    <property type="entry name" value="SDRFAMILY"/>
</dbReference>
<dbReference type="SUPFAM" id="SSF51735">
    <property type="entry name" value="NAD(P)-binding Rossmann-fold domains"/>
    <property type="match status" value="1"/>
</dbReference>
<dbReference type="PROSITE" id="PS00061">
    <property type="entry name" value="ADH_SHORT"/>
    <property type="match status" value="1"/>
</dbReference>
<keyword id="KW-0560">Oxidoreductase</keyword>
<keyword id="KW-1185">Reference proteome</keyword>
<protein>
    <recommendedName>
        <fullName>Uncharacterized oxidoreductase YhxC</fullName>
        <ecNumber>1.-.-.-</ecNumber>
    </recommendedName>
    <alternativeName>
        <fullName>ORFX</fullName>
    </alternativeName>
</protein>
<gene>
    <name type="primary">yhxC</name>
    <name type="ordered locus">BSU10400</name>
</gene>
<feature type="chain" id="PRO_0000054844" description="Uncharacterized oxidoreductase YhxC">
    <location>
        <begin position="1"/>
        <end position="285"/>
    </location>
</feature>
<feature type="region of interest" description="Disordered" evidence="3">
    <location>
        <begin position="1"/>
        <end position="25"/>
    </location>
</feature>
<feature type="active site" description="Proton acceptor" evidence="2">
    <location>
        <position position="190"/>
    </location>
</feature>
<feature type="binding site" evidence="1">
    <location>
        <begin position="45"/>
        <end position="69"/>
    </location>
    <ligand>
        <name>NADP(+)</name>
        <dbReference type="ChEBI" id="CHEBI:58349"/>
    </ligand>
</feature>
<feature type="binding site" evidence="1">
    <location>
        <position position="177"/>
    </location>
    <ligand>
        <name>substrate</name>
    </ligand>
</feature>
<feature type="sequence conflict" description="In Ref. 3; AAB30863." evidence="4" ref="3">
    <original>A</original>
    <variation>R</variation>
    <location>
        <position position="196"/>
    </location>
</feature>
<name>YHXC_BACSU</name>
<organism>
    <name type="scientific">Bacillus subtilis (strain 168)</name>
    <dbReference type="NCBI Taxonomy" id="224308"/>
    <lineage>
        <taxon>Bacteria</taxon>
        <taxon>Bacillati</taxon>
        <taxon>Bacillota</taxon>
        <taxon>Bacilli</taxon>
        <taxon>Bacillales</taxon>
        <taxon>Bacillaceae</taxon>
        <taxon>Bacillus</taxon>
    </lineage>
</organism>
<reference key="1">
    <citation type="journal article" date="1998" name="Microbiology">
        <title>The 172 kb prkA-addAB region from 83 degrees to 97 degrees of the Bacillus subtilis chromosome contains several dysfunctional genes, the glyB marker, many genes encoding transporter proteins, and the ubiquitous hit gene.</title>
        <authorList>
            <person name="Noback M.A."/>
            <person name="Holsappel S."/>
            <person name="Kiewiet R."/>
            <person name="Terpstra P."/>
            <person name="Wambutt R."/>
            <person name="Wedler H."/>
            <person name="Venema G."/>
            <person name="Bron S."/>
        </authorList>
    </citation>
    <scope>NUCLEOTIDE SEQUENCE [GENOMIC DNA]</scope>
    <source>
        <strain>168</strain>
    </source>
</reference>
<reference key="2">
    <citation type="journal article" date="1997" name="Nature">
        <title>The complete genome sequence of the Gram-positive bacterium Bacillus subtilis.</title>
        <authorList>
            <person name="Kunst F."/>
            <person name="Ogasawara N."/>
            <person name="Moszer I."/>
            <person name="Albertini A.M."/>
            <person name="Alloni G."/>
            <person name="Azevedo V."/>
            <person name="Bertero M.G."/>
            <person name="Bessieres P."/>
            <person name="Bolotin A."/>
            <person name="Borchert S."/>
            <person name="Borriss R."/>
            <person name="Boursier L."/>
            <person name="Brans A."/>
            <person name="Braun M."/>
            <person name="Brignell S.C."/>
            <person name="Bron S."/>
            <person name="Brouillet S."/>
            <person name="Bruschi C.V."/>
            <person name="Caldwell B."/>
            <person name="Capuano V."/>
            <person name="Carter N.M."/>
            <person name="Choi S.-K."/>
            <person name="Codani J.-J."/>
            <person name="Connerton I.F."/>
            <person name="Cummings N.J."/>
            <person name="Daniel R.A."/>
            <person name="Denizot F."/>
            <person name="Devine K.M."/>
            <person name="Duesterhoeft A."/>
            <person name="Ehrlich S.D."/>
            <person name="Emmerson P.T."/>
            <person name="Entian K.-D."/>
            <person name="Errington J."/>
            <person name="Fabret C."/>
            <person name="Ferrari E."/>
            <person name="Foulger D."/>
            <person name="Fritz C."/>
            <person name="Fujita M."/>
            <person name="Fujita Y."/>
            <person name="Fuma S."/>
            <person name="Galizzi A."/>
            <person name="Galleron N."/>
            <person name="Ghim S.-Y."/>
            <person name="Glaser P."/>
            <person name="Goffeau A."/>
            <person name="Golightly E.J."/>
            <person name="Grandi G."/>
            <person name="Guiseppi G."/>
            <person name="Guy B.J."/>
            <person name="Haga K."/>
            <person name="Haiech J."/>
            <person name="Harwood C.R."/>
            <person name="Henaut A."/>
            <person name="Hilbert H."/>
            <person name="Holsappel S."/>
            <person name="Hosono S."/>
            <person name="Hullo M.-F."/>
            <person name="Itaya M."/>
            <person name="Jones L.-M."/>
            <person name="Joris B."/>
            <person name="Karamata D."/>
            <person name="Kasahara Y."/>
            <person name="Klaerr-Blanchard M."/>
            <person name="Klein C."/>
            <person name="Kobayashi Y."/>
            <person name="Koetter P."/>
            <person name="Koningstein G."/>
            <person name="Krogh S."/>
            <person name="Kumano M."/>
            <person name="Kurita K."/>
            <person name="Lapidus A."/>
            <person name="Lardinois S."/>
            <person name="Lauber J."/>
            <person name="Lazarevic V."/>
            <person name="Lee S.-M."/>
            <person name="Levine A."/>
            <person name="Liu H."/>
            <person name="Masuda S."/>
            <person name="Mauel C."/>
            <person name="Medigue C."/>
            <person name="Medina N."/>
            <person name="Mellado R.P."/>
            <person name="Mizuno M."/>
            <person name="Moestl D."/>
            <person name="Nakai S."/>
            <person name="Noback M."/>
            <person name="Noone D."/>
            <person name="O'Reilly M."/>
            <person name="Ogawa K."/>
            <person name="Ogiwara A."/>
            <person name="Oudega B."/>
            <person name="Park S.-H."/>
            <person name="Parro V."/>
            <person name="Pohl T.M."/>
            <person name="Portetelle D."/>
            <person name="Porwollik S."/>
            <person name="Prescott A.M."/>
            <person name="Presecan E."/>
            <person name="Pujic P."/>
            <person name="Purnelle B."/>
            <person name="Rapoport G."/>
            <person name="Rey M."/>
            <person name="Reynolds S."/>
            <person name="Rieger M."/>
            <person name="Rivolta C."/>
            <person name="Rocha E."/>
            <person name="Roche B."/>
            <person name="Rose M."/>
            <person name="Sadaie Y."/>
            <person name="Sato T."/>
            <person name="Scanlan E."/>
            <person name="Schleich S."/>
            <person name="Schroeter R."/>
            <person name="Scoffone F."/>
            <person name="Sekiguchi J."/>
            <person name="Sekowska A."/>
            <person name="Seror S.J."/>
            <person name="Serror P."/>
            <person name="Shin B.-S."/>
            <person name="Soldo B."/>
            <person name="Sorokin A."/>
            <person name="Tacconi E."/>
            <person name="Takagi T."/>
            <person name="Takahashi H."/>
            <person name="Takemaru K."/>
            <person name="Takeuchi M."/>
            <person name="Tamakoshi A."/>
            <person name="Tanaka T."/>
            <person name="Terpstra P."/>
            <person name="Tognoni A."/>
            <person name="Tosato V."/>
            <person name="Uchiyama S."/>
            <person name="Vandenbol M."/>
            <person name="Vannier F."/>
            <person name="Vassarotti A."/>
            <person name="Viari A."/>
            <person name="Wambutt R."/>
            <person name="Wedler E."/>
            <person name="Wedler H."/>
            <person name="Weitzenegger T."/>
            <person name="Winters P."/>
            <person name="Wipat A."/>
            <person name="Yamamoto H."/>
            <person name="Yamane K."/>
            <person name="Yasumoto K."/>
            <person name="Yata K."/>
            <person name="Yoshida K."/>
            <person name="Yoshikawa H.-F."/>
            <person name="Zumstein E."/>
            <person name="Yoshikawa H."/>
            <person name="Danchin A."/>
        </authorList>
    </citation>
    <scope>NUCLEOTIDE SEQUENCE [LARGE SCALE GENOMIC DNA]</scope>
    <source>
        <strain>168</strain>
    </source>
</reference>
<reference key="3">
    <citation type="journal article" date="1994" name="Mol. Microbiol.">
        <title>Molecular cloning and sequence of comK, a gene required for genetic competence in Bacillus subtilis.</title>
        <authorList>
            <person name="van Sinderen D."/>
            <person name="ten Berge A."/>
            <person name="Hayema B.J."/>
            <person name="Hamoen L."/>
            <person name="Venema G."/>
        </authorList>
    </citation>
    <scope>NUCLEOTIDE SEQUENCE [GENOMIC DNA] OF 172-285</scope>
    <source>
        <strain>E26</strain>
    </source>
</reference>
<accession>P40397</accession>
<accession>O07908</accession>